<evidence type="ECO:0000255" key="1">
    <source>
        <dbReference type="HAMAP-Rule" id="MF_01306"/>
    </source>
</evidence>
<evidence type="ECO:0000256" key="2">
    <source>
        <dbReference type="SAM" id="MobiDB-lite"/>
    </source>
</evidence>
<evidence type="ECO:0000305" key="3"/>
<gene>
    <name evidence="1" type="primary">rpsD</name>
    <name type="ordered locus">jhp_1214</name>
</gene>
<protein>
    <recommendedName>
        <fullName evidence="1">Small ribosomal subunit protein uS4</fullName>
    </recommendedName>
    <alternativeName>
        <fullName evidence="3">30S ribosomal protein S4</fullName>
    </alternativeName>
</protein>
<name>RS4_HELPJ</name>
<reference key="1">
    <citation type="journal article" date="1999" name="Nature">
        <title>Genomic sequence comparison of two unrelated isolates of the human gastric pathogen Helicobacter pylori.</title>
        <authorList>
            <person name="Alm R.A."/>
            <person name="Ling L.-S.L."/>
            <person name="Moir D.T."/>
            <person name="King B.L."/>
            <person name="Brown E.D."/>
            <person name="Doig P.C."/>
            <person name="Smith D.R."/>
            <person name="Noonan B."/>
            <person name="Guild B.C."/>
            <person name="deJonge B.L."/>
            <person name="Carmel G."/>
            <person name="Tummino P.J."/>
            <person name="Caruso A."/>
            <person name="Uria-Nickelsen M."/>
            <person name="Mills D.M."/>
            <person name="Ives C."/>
            <person name="Gibson R."/>
            <person name="Merberg D."/>
            <person name="Mills S.D."/>
            <person name="Jiang Q."/>
            <person name="Taylor D.E."/>
            <person name="Vovis G.F."/>
            <person name="Trust T.J."/>
        </authorList>
    </citation>
    <scope>NUCLEOTIDE SEQUENCE [LARGE SCALE GENOMIC DNA]</scope>
    <source>
        <strain>J99 / ATCC 700824</strain>
    </source>
</reference>
<feature type="chain" id="PRO_0000132394" description="Small ribosomal subunit protein uS4">
    <location>
        <begin position="1"/>
        <end position="208"/>
    </location>
</feature>
<feature type="domain" description="S4 RNA-binding" evidence="1">
    <location>
        <begin position="98"/>
        <end position="161"/>
    </location>
</feature>
<feature type="region of interest" description="Disordered" evidence="2">
    <location>
        <begin position="31"/>
        <end position="50"/>
    </location>
</feature>
<proteinExistence type="inferred from homology"/>
<organism>
    <name type="scientific">Helicobacter pylori (strain J99 / ATCC 700824)</name>
    <name type="common">Campylobacter pylori J99</name>
    <dbReference type="NCBI Taxonomy" id="85963"/>
    <lineage>
        <taxon>Bacteria</taxon>
        <taxon>Pseudomonadati</taxon>
        <taxon>Campylobacterota</taxon>
        <taxon>Epsilonproteobacteria</taxon>
        <taxon>Campylobacterales</taxon>
        <taxon>Helicobacteraceae</taxon>
        <taxon>Helicobacter</taxon>
    </lineage>
</organism>
<accession>Q9ZJT4</accession>
<dbReference type="EMBL" id="AE001439">
    <property type="protein sequence ID" value="AAD06816.1"/>
    <property type="molecule type" value="Genomic_DNA"/>
</dbReference>
<dbReference type="PIR" id="F71832">
    <property type="entry name" value="F71832"/>
</dbReference>
<dbReference type="RefSeq" id="WP_000135258.1">
    <property type="nucleotide sequence ID" value="NZ_CP011330.1"/>
</dbReference>
<dbReference type="SMR" id="Q9ZJT4"/>
<dbReference type="KEGG" id="hpj:jhp_1214"/>
<dbReference type="PATRIC" id="fig|85963.30.peg.1357"/>
<dbReference type="eggNOG" id="COG0522">
    <property type="taxonomic scope" value="Bacteria"/>
</dbReference>
<dbReference type="Proteomes" id="UP000000804">
    <property type="component" value="Chromosome"/>
</dbReference>
<dbReference type="GO" id="GO:0015935">
    <property type="term" value="C:small ribosomal subunit"/>
    <property type="evidence" value="ECO:0007669"/>
    <property type="project" value="InterPro"/>
</dbReference>
<dbReference type="GO" id="GO:0019843">
    <property type="term" value="F:rRNA binding"/>
    <property type="evidence" value="ECO:0007669"/>
    <property type="project" value="UniProtKB-UniRule"/>
</dbReference>
<dbReference type="GO" id="GO:0003735">
    <property type="term" value="F:structural constituent of ribosome"/>
    <property type="evidence" value="ECO:0007669"/>
    <property type="project" value="InterPro"/>
</dbReference>
<dbReference type="GO" id="GO:0042274">
    <property type="term" value="P:ribosomal small subunit biogenesis"/>
    <property type="evidence" value="ECO:0007669"/>
    <property type="project" value="TreeGrafter"/>
</dbReference>
<dbReference type="GO" id="GO:0006412">
    <property type="term" value="P:translation"/>
    <property type="evidence" value="ECO:0007669"/>
    <property type="project" value="UniProtKB-UniRule"/>
</dbReference>
<dbReference type="CDD" id="cd00165">
    <property type="entry name" value="S4"/>
    <property type="match status" value="1"/>
</dbReference>
<dbReference type="FunFam" id="1.10.1050.10:FF:000001">
    <property type="entry name" value="30S ribosomal protein S4"/>
    <property type="match status" value="1"/>
</dbReference>
<dbReference type="FunFam" id="3.10.290.10:FF:000001">
    <property type="entry name" value="30S ribosomal protein S4"/>
    <property type="match status" value="1"/>
</dbReference>
<dbReference type="Gene3D" id="1.10.1050.10">
    <property type="entry name" value="Ribosomal Protein S4 Delta 41, Chain A, domain 1"/>
    <property type="match status" value="1"/>
</dbReference>
<dbReference type="Gene3D" id="3.10.290.10">
    <property type="entry name" value="RNA-binding S4 domain"/>
    <property type="match status" value="1"/>
</dbReference>
<dbReference type="HAMAP" id="MF_01306_B">
    <property type="entry name" value="Ribosomal_uS4_B"/>
    <property type="match status" value="1"/>
</dbReference>
<dbReference type="InterPro" id="IPR022801">
    <property type="entry name" value="Ribosomal_uS4"/>
</dbReference>
<dbReference type="InterPro" id="IPR005709">
    <property type="entry name" value="Ribosomal_uS4_bac-type"/>
</dbReference>
<dbReference type="InterPro" id="IPR018079">
    <property type="entry name" value="Ribosomal_uS4_CS"/>
</dbReference>
<dbReference type="InterPro" id="IPR001912">
    <property type="entry name" value="Ribosomal_uS4_N"/>
</dbReference>
<dbReference type="InterPro" id="IPR002942">
    <property type="entry name" value="S4_RNA-bd"/>
</dbReference>
<dbReference type="InterPro" id="IPR036986">
    <property type="entry name" value="S4_RNA-bd_sf"/>
</dbReference>
<dbReference type="NCBIfam" id="NF003717">
    <property type="entry name" value="PRK05327.1"/>
    <property type="match status" value="1"/>
</dbReference>
<dbReference type="NCBIfam" id="TIGR01017">
    <property type="entry name" value="rpsD_bact"/>
    <property type="match status" value="1"/>
</dbReference>
<dbReference type="PANTHER" id="PTHR11831">
    <property type="entry name" value="30S 40S RIBOSOMAL PROTEIN"/>
    <property type="match status" value="1"/>
</dbReference>
<dbReference type="PANTHER" id="PTHR11831:SF4">
    <property type="entry name" value="SMALL RIBOSOMAL SUBUNIT PROTEIN US4M"/>
    <property type="match status" value="1"/>
</dbReference>
<dbReference type="Pfam" id="PF00163">
    <property type="entry name" value="Ribosomal_S4"/>
    <property type="match status" value="1"/>
</dbReference>
<dbReference type="Pfam" id="PF01479">
    <property type="entry name" value="S4"/>
    <property type="match status" value="1"/>
</dbReference>
<dbReference type="SMART" id="SM01390">
    <property type="entry name" value="Ribosomal_S4"/>
    <property type="match status" value="1"/>
</dbReference>
<dbReference type="SMART" id="SM00363">
    <property type="entry name" value="S4"/>
    <property type="match status" value="1"/>
</dbReference>
<dbReference type="SUPFAM" id="SSF55174">
    <property type="entry name" value="Alpha-L RNA-binding motif"/>
    <property type="match status" value="1"/>
</dbReference>
<dbReference type="PROSITE" id="PS00632">
    <property type="entry name" value="RIBOSOMAL_S4"/>
    <property type="match status" value="1"/>
</dbReference>
<dbReference type="PROSITE" id="PS50889">
    <property type="entry name" value="S4"/>
    <property type="match status" value="1"/>
</dbReference>
<comment type="function">
    <text evidence="1">One of the primary rRNA binding proteins, it binds directly to 16S rRNA where it nucleates assembly of the body of the 30S subunit.</text>
</comment>
<comment type="function">
    <text evidence="1">With S5 and S12 plays an important role in translational accuracy.</text>
</comment>
<comment type="subunit">
    <text evidence="1">Part of the 30S ribosomal subunit. Contacts protein S5. The interaction surface between S4 and S5 is involved in control of translational fidelity.</text>
</comment>
<comment type="similarity">
    <text evidence="1">Belongs to the universal ribosomal protein uS4 family.</text>
</comment>
<keyword id="KW-0687">Ribonucleoprotein</keyword>
<keyword id="KW-0689">Ribosomal protein</keyword>
<keyword id="KW-0694">RNA-binding</keyword>
<keyword id="KW-0699">rRNA-binding</keyword>
<sequence length="208" mass="24005">MARYRGAVERLERRFGVSLALKGERRLSGKSALDKRAYGPGQHGQRRTKTSDYGLQLKEKQKAKMMYGISEKQFRSIFVEANRLDGNTGENLIRLIERRLDNVVYRMGFATTRSSARQLVTHGHVLVDGKRLDIPSYFVRSGQKIEIKEKTKSNPQVVRAMELTAQTGIVPWIDVEKDKKYGIFTRYPEREEVVVPIEERLIVELYSK</sequence>